<reference key="1">
    <citation type="submission" date="2009-04" db="EMBL/GenBank/DDBJ databases">
        <title>Genome sequence of Bacillus anthracis A0248.</title>
        <authorList>
            <person name="Dodson R.J."/>
            <person name="Munk A.C."/>
            <person name="Bruce D."/>
            <person name="Detter C."/>
            <person name="Tapia R."/>
            <person name="Sutton G."/>
            <person name="Sims D."/>
            <person name="Brettin T."/>
        </authorList>
    </citation>
    <scope>NUCLEOTIDE SEQUENCE [LARGE SCALE GENOMIC DNA]</scope>
    <source>
        <strain>A0248</strain>
    </source>
</reference>
<accession>C3P505</accession>
<proteinExistence type="inferred from homology"/>
<comment type="catalytic activity">
    <reaction evidence="1">
        <text>1-(5-phospho-beta-D-ribosyl)-5-[(5-phospho-beta-D-ribosylamino)methylideneamino]imidazole-4-carboxamide = 5-[(5-phospho-1-deoxy-D-ribulos-1-ylimino)methylamino]-1-(5-phospho-beta-D-ribosyl)imidazole-4-carboxamide</text>
        <dbReference type="Rhea" id="RHEA:15469"/>
        <dbReference type="ChEBI" id="CHEBI:58435"/>
        <dbReference type="ChEBI" id="CHEBI:58525"/>
        <dbReference type="EC" id="5.3.1.16"/>
    </reaction>
</comment>
<comment type="pathway">
    <text evidence="1">Amino-acid biosynthesis; L-histidine biosynthesis; L-histidine from 5-phospho-alpha-D-ribose 1-diphosphate: step 4/9.</text>
</comment>
<comment type="subcellular location">
    <subcellularLocation>
        <location evidence="1">Cytoplasm</location>
    </subcellularLocation>
</comment>
<comment type="similarity">
    <text evidence="1">Belongs to the HisA/HisF family.</text>
</comment>
<organism>
    <name type="scientific">Bacillus anthracis (strain A0248)</name>
    <dbReference type="NCBI Taxonomy" id="592021"/>
    <lineage>
        <taxon>Bacteria</taxon>
        <taxon>Bacillati</taxon>
        <taxon>Bacillota</taxon>
        <taxon>Bacilli</taxon>
        <taxon>Bacillales</taxon>
        <taxon>Bacillaceae</taxon>
        <taxon>Bacillus</taxon>
        <taxon>Bacillus cereus group</taxon>
    </lineage>
</organism>
<evidence type="ECO:0000255" key="1">
    <source>
        <dbReference type="HAMAP-Rule" id="MF_01014"/>
    </source>
</evidence>
<sequence>MEIFPAIDLKEGRCVRLYQGEFSKETVMNEDPVAQAIIFEKFGAKRLHIVDLDGAVAGESLNLSVIERICKAVRIPVQVGGGIRSLVAVEKLFSVGVDKVILGTAALYDKTFLEEAVLLYKEKIIVGIDAKNGFVATRGWLDVSEISYIDLAKQMEKIGVQTIVFTDISKDGTLAGPNIEQLELLQKSVAIRLIASGGVASIQDVKKLNDMNIYGVIIGKALYEKTIDLEEVVEVTKLC</sequence>
<protein>
    <recommendedName>
        <fullName evidence="1">1-(5-phosphoribosyl)-5-[(5-phosphoribosylamino)methylideneamino] imidazole-4-carboxamide isomerase</fullName>
        <ecNumber evidence="1">5.3.1.16</ecNumber>
    </recommendedName>
    <alternativeName>
        <fullName evidence="1">Phosphoribosylformimino-5-aminoimidazole carboxamide ribotide isomerase</fullName>
    </alternativeName>
</protein>
<dbReference type="EC" id="5.3.1.16" evidence="1"/>
<dbReference type="EMBL" id="CP001598">
    <property type="protein sequence ID" value="ACQ49062.1"/>
    <property type="molecule type" value="Genomic_DNA"/>
</dbReference>
<dbReference type="RefSeq" id="WP_000402281.1">
    <property type="nucleotide sequence ID" value="NC_012659.1"/>
</dbReference>
<dbReference type="SMR" id="C3P505"/>
<dbReference type="GeneID" id="45021408"/>
<dbReference type="KEGG" id="bai:BAA_1496"/>
<dbReference type="HOGENOM" id="CLU_048577_1_1_9"/>
<dbReference type="UniPathway" id="UPA00031">
    <property type="reaction ID" value="UER00009"/>
</dbReference>
<dbReference type="GO" id="GO:0005737">
    <property type="term" value="C:cytoplasm"/>
    <property type="evidence" value="ECO:0007669"/>
    <property type="project" value="UniProtKB-SubCell"/>
</dbReference>
<dbReference type="GO" id="GO:0003949">
    <property type="term" value="F:1-(5-phosphoribosyl)-5-[(5-phosphoribosylamino)methylideneamino]imidazole-4-carboxamide isomerase activity"/>
    <property type="evidence" value="ECO:0007669"/>
    <property type="project" value="UniProtKB-UniRule"/>
</dbReference>
<dbReference type="GO" id="GO:0000105">
    <property type="term" value="P:L-histidine biosynthetic process"/>
    <property type="evidence" value="ECO:0007669"/>
    <property type="project" value="UniProtKB-UniRule"/>
</dbReference>
<dbReference type="GO" id="GO:0000162">
    <property type="term" value="P:L-tryptophan biosynthetic process"/>
    <property type="evidence" value="ECO:0007669"/>
    <property type="project" value="TreeGrafter"/>
</dbReference>
<dbReference type="CDD" id="cd04732">
    <property type="entry name" value="HisA"/>
    <property type="match status" value="1"/>
</dbReference>
<dbReference type="FunFam" id="3.20.20.70:FF:000009">
    <property type="entry name" value="1-(5-phosphoribosyl)-5-[(5-phosphoribosylamino)methylideneamino] imidazole-4-carboxamide isomerase"/>
    <property type="match status" value="1"/>
</dbReference>
<dbReference type="Gene3D" id="3.20.20.70">
    <property type="entry name" value="Aldolase class I"/>
    <property type="match status" value="1"/>
</dbReference>
<dbReference type="HAMAP" id="MF_01014">
    <property type="entry name" value="HisA"/>
    <property type="match status" value="1"/>
</dbReference>
<dbReference type="InterPro" id="IPR013785">
    <property type="entry name" value="Aldolase_TIM"/>
</dbReference>
<dbReference type="InterPro" id="IPR006062">
    <property type="entry name" value="His_biosynth"/>
</dbReference>
<dbReference type="InterPro" id="IPR006063">
    <property type="entry name" value="HisA_bact_arch"/>
</dbReference>
<dbReference type="InterPro" id="IPR044524">
    <property type="entry name" value="Isoase_HisA-like"/>
</dbReference>
<dbReference type="InterPro" id="IPR023016">
    <property type="entry name" value="Isoase_HisA-like_bact"/>
</dbReference>
<dbReference type="InterPro" id="IPR011060">
    <property type="entry name" value="RibuloseP-bd_barrel"/>
</dbReference>
<dbReference type="NCBIfam" id="TIGR00007">
    <property type="entry name" value="1-(5-phosphoribosyl)-5-[(5-phosphoribosylamino)methylideneamino]imidazole-4-carboxamide isomerase"/>
    <property type="match status" value="1"/>
</dbReference>
<dbReference type="PANTHER" id="PTHR43090">
    <property type="entry name" value="1-(5-PHOSPHORIBOSYL)-5-[(5-PHOSPHORIBOSYLAMINO)METHYLIDENEAMINO] IMIDAZOLE-4-CARBOXAMIDE ISOMERASE"/>
    <property type="match status" value="1"/>
</dbReference>
<dbReference type="PANTHER" id="PTHR43090:SF2">
    <property type="entry name" value="1-(5-PHOSPHORIBOSYL)-5-[(5-PHOSPHORIBOSYLAMINO)METHYLIDENEAMINO] IMIDAZOLE-4-CARBOXAMIDE ISOMERASE"/>
    <property type="match status" value="1"/>
</dbReference>
<dbReference type="Pfam" id="PF00977">
    <property type="entry name" value="His_biosynth"/>
    <property type="match status" value="1"/>
</dbReference>
<dbReference type="SUPFAM" id="SSF51366">
    <property type="entry name" value="Ribulose-phoshate binding barrel"/>
    <property type="match status" value="1"/>
</dbReference>
<name>HIS4_BACAA</name>
<feature type="chain" id="PRO_1000148949" description="1-(5-phosphoribosyl)-5-[(5-phosphoribosylamino)methylideneamino] imidazole-4-carboxamide isomerase">
    <location>
        <begin position="1"/>
        <end position="239"/>
    </location>
</feature>
<feature type="active site" description="Proton acceptor" evidence="1">
    <location>
        <position position="8"/>
    </location>
</feature>
<feature type="active site" description="Proton donor" evidence="1">
    <location>
        <position position="129"/>
    </location>
</feature>
<gene>
    <name evidence="1" type="primary">hisA</name>
    <name type="ordered locus">BAA_1496</name>
</gene>
<keyword id="KW-0028">Amino-acid biosynthesis</keyword>
<keyword id="KW-0963">Cytoplasm</keyword>
<keyword id="KW-0368">Histidine biosynthesis</keyword>
<keyword id="KW-0413">Isomerase</keyword>